<evidence type="ECO:0000250" key="1"/>
<evidence type="ECO:0000250" key="2">
    <source>
        <dbReference type="UniProtKB" id="Q26998"/>
    </source>
</evidence>
<evidence type="ECO:0000256" key="3">
    <source>
        <dbReference type="SAM" id="MobiDB-lite"/>
    </source>
</evidence>
<evidence type="ECO:0000305" key="4"/>
<evidence type="ECO:0007744" key="5">
    <source>
    </source>
</evidence>
<dbReference type="EMBL" id="AL731717">
    <property type="status" value="NOT_ANNOTATED_CDS"/>
    <property type="molecule type" value="Genomic_DNA"/>
</dbReference>
<dbReference type="EMBL" id="BC147845">
    <property type="protein sequence ID" value="AAI47846.1"/>
    <property type="molecule type" value="mRNA"/>
</dbReference>
<dbReference type="EMBL" id="BC147853">
    <property type="protein sequence ID" value="AAI47854.1"/>
    <property type="molecule type" value="mRNA"/>
</dbReference>
<dbReference type="CCDS" id="CCDS41093.1"/>
<dbReference type="RefSeq" id="NP_001074658.1">
    <property type="nucleotide sequence ID" value="NM_001081189.3"/>
</dbReference>
<dbReference type="SMR" id="B1AVZ0"/>
<dbReference type="BioGRID" id="237102">
    <property type="interactions" value="1"/>
</dbReference>
<dbReference type="FunCoup" id="B1AVZ0">
    <property type="interactions" value="2573"/>
</dbReference>
<dbReference type="STRING" id="10090.ENSMUSP00000085175"/>
<dbReference type="GlyGen" id="B1AVZ0">
    <property type="glycosylation" value="1 site, 1 O-linked glycan (1 site)"/>
</dbReference>
<dbReference type="iPTMnet" id="B1AVZ0"/>
<dbReference type="PhosphoSitePlus" id="B1AVZ0"/>
<dbReference type="jPOST" id="B1AVZ0"/>
<dbReference type="PaxDb" id="10090-ENSMUSP00000085175"/>
<dbReference type="PeptideAtlas" id="B1AVZ0"/>
<dbReference type="ProteomicsDB" id="298126"/>
<dbReference type="Pumba" id="B1AVZ0"/>
<dbReference type="Antibodypedia" id="361">
    <property type="antibodies" value="293 antibodies from 18 providers"/>
</dbReference>
<dbReference type="Ensembl" id="ENSMUST00000087867.6">
    <property type="protein sequence ID" value="ENSMUSP00000085175.6"/>
    <property type="gene ID" value="ENSMUSG00000073016.4"/>
</dbReference>
<dbReference type="GeneID" id="331487"/>
<dbReference type="KEGG" id="mmu:331487"/>
<dbReference type="UCSC" id="uc009uai.1">
    <property type="organism name" value="mouse"/>
</dbReference>
<dbReference type="AGR" id="MGI:2685620"/>
<dbReference type="CTD" id="139596"/>
<dbReference type="MGI" id="MGI:2685620">
    <property type="gene designation" value="Uprt"/>
</dbReference>
<dbReference type="VEuPathDB" id="HostDB:ENSMUSG00000073016"/>
<dbReference type="eggNOG" id="KOG1017">
    <property type="taxonomic scope" value="Eukaryota"/>
</dbReference>
<dbReference type="GeneTree" id="ENSGT01020000230412"/>
<dbReference type="HOGENOM" id="CLU_067096_1_0_1"/>
<dbReference type="InParanoid" id="B1AVZ0"/>
<dbReference type="OMA" id="NLFCTPM"/>
<dbReference type="OrthoDB" id="106623at2759"/>
<dbReference type="PhylomeDB" id="B1AVZ0"/>
<dbReference type="TreeFam" id="TF105900"/>
<dbReference type="BioGRID-ORCS" id="331487">
    <property type="hits" value="1 hit in 76 CRISPR screens"/>
</dbReference>
<dbReference type="PRO" id="PR:B1AVZ0"/>
<dbReference type="Proteomes" id="UP000000589">
    <property type="component" value="Chromosome X"/>
</dbReference>
<dbReference type="RNAct" id="B1AVZ0">
    <property type="molecule type" value="protein"/>
</dbReference>
<dbReference type="Bgee" id="ENSMUSG00000073016">
    <property type="expression patterns" value="Expressed in jejunum and 61 other cell types or tissues"/>
</dbReference>
<dbReference type="GO" id="GO:0005737">
    <property type="term" value="C:cytoplasm"/>
    <property type="evidence" value="ECO:0007669"/>
    <property type="project" value="UniProtKB-SubCell"/>
</dbReference>
<dbReference type="GO" id="GO:0005654">
    <property type="term" value="C:nucleoplasm"/>
    <property type="evidence" value="ECO:0007669"/>
    <property type="project" value="Ensembl"/>
</dbReference>
<dbReference type="GO" id="GO:0005525">
    <property type="term" value="F:GTP binding"/>
    <property type="evidence" value="ECO:0007669"/>
    <property type="project" value="UniProtKB-KW"/>
</dbReference>
<dbReference type="GO" id="GO:0007565">
    <property type="term" value="P:female pregnancy"/>
    <property type="evidence" value="ECO:0007669"/>
    <property type="project" value="Ensembl"/>
</dbReference>
<dbReference type="GO" id="GO:0007595">
    <property type="term" value="P:lactation"/>
    <property type="evidence" value="ECO:0007669"/>
    <property type="project" value="Ensembl"/>
</dbReference>
<dbReference type="GO" id="GO:0032868">
    <property type="term" value="P:response to insulin"/>
    <property type="evidence" value="ECO:0007669"/>
    <property type="project" value="Ensembl"/>
</dbReference>
<dbReference type="GO" id="GO:0006222">
    <property type="term" value="P:UMP biosynthetic process"/>
    <property type="evidence" value="ECO:0007669"/>
    <property type="project" value="Ensembl"/>
</dbReference>
<dbReference type="CDD" id="cd06223">
    <property type="entry name" value="PRTases_typeI"/>
    <property type="match status" value="1"/>
</dbReference>
<dbReference type="FunFam" id="3.40.50.2020:FF:000026">
    <property type="entry name" value="Uracil phosphoribosyltransferase homolog"/>
    <property type="match status" value="1"/>
</dbReference>
<dbReference type="Gene3D" id="3.40.50.2020">
    <property type="match status" value="1"/>
</dbReference>
<dbReference type="InterPro" id="IPR000836">
    <property type="entry name" value="PRibTrfase_dom"/>
</dbReference>
<dbReference type="InterPro" id="IPR029057">
    <property type="entry name" value="PRTase-like"/>
</dbReference>
<dbReference type="Pfam" id="PF14681">
    <property type="entry name" value="UPRTase"/>
    <property type="match status" value="1"/>
</dbReference>
<dbReference type="SUPFAM" id="SSF53271">
    <property type="entry name" value="PRTase-like"/>
    <property type="match status" value="1"/>
</dbReference>
<organism>
    <name type="scientific">Mus musculus</name>
    <name type="common">Mouse</name>
    <dbReference type="NCBI Taxonomy" id="10090"/>
    <lineage>
        <taxon>Eukaryota</taxon>
        <taxon>Metazoa</taxon>
        <taxon>Chordata</taxon>
        <taxon>Craniata</taxon>
        <taxon>Vertebrata</taxon>
        <taxon>Euteleostomi</taxon>
        <taxon>Mammalia</taxon>
        <taxon>Eutheria</taxon>
        <taxon>Euarchontoglires</taxon>
        <taxon>Glires</taxon>
        <taxon>Rodentia</taxon>
        <taxon>Myomorpha</taxon>
        <taxon>Muroidea</taxon>
        <taxon>Muridae</taxon>
        <taxon>Murinae</taxon>
        <taxon>Mus</taxon>
        <taxon>Mus</taxon>
    </lineage>
</organism>
<reference key="1">
    <citation type="journal article" date="2009" name="PLoS Biol.">
        <title>Lineage-specific biology revealed by a finished genome assembly of the mouse.</title>
        <authorList>
            <person name="Church D.M."/>
            <person name="Goodstadt L."/>
            <person name="Hillier L.W."/>
            <person name="Zody M.C."/>
            <person name="Goldstein S."/>
            <person name="She X."/>
            <person name="Bult C.J."/>
            <person name="Agarwala R."/>
            <person name="Cherry J.L."/>
            <person name="DiCuccio M."/>
            <person name="Hlavina W."/>
            <person name="Kapustin Y."/>
            <person name="Meric P."/>
            <person name="Maglott D."/>
            <person name="Birtle Z."/>
            <person name="Marques A.C."/>
            <person name="Graves T."/>
            <person name="Zhou S."/>
            <person name="Teague B."/>
            <person name="Potamousis K."/>
            <person name="Churas C."/>
            <person name="Place M."/>
            <person name="Herschleb J."/>
            <person name="Runnheim R."/>
            <person name="Forrest D."/>
            <person name="Amos-Landgraf J."/>
            <person name="Schwartz D.C."/>
            <person name="Cheng Z."/>
            <person name="Lindblad-Toh K."/>
            <person name="Eichler E.E."/>
            <person name="Ponting C.P."/>
        </authorList>
    </citation>
    <scope>NUCLEOTIDE SEQUENCE [LARGE SCALE GENOMIC DNA]</scope>
    <source>
        <strain>C57BL/6J</strain>
    </source>
</reference>
<reference key="2">
    <citation type="journal article" date="2004" name="Genome Res.">
        <title>The status, quality, and expansion of the NIH full-length cDNA project: the Mammalian Gene Collection (MGC).</title>
        <authorList>
            <consortium name="The MGC Project Team"/>
        </authorList>
    </citation>
    <scope>NUCLEOTIDE SEQUENCE [LARGE SCALE MRNA]</scope>
    <source>
        <tissue>Brain</tissue>
    </source>
</reference>
<reference key="3">
    <citation type="journal article" date="2010" name="Cell">
        <title>A tissue-specific atlas of mouse protein phosphorylation and expression.</title>
        <authorList>
            <person name="Huttlin E.L."/>
            <person name="Jedrychowski M.P."/>
            <person name="Elias J.E."/>
            <person name="Goswami T."/>
            <person name="Rad R."/>
            <person name="Beausoleil S.A."/>
            <person name="Villen J."/>
            <person name="Haas W."/>
            <person name="Sowa M.E."/>
            <person name="Gygi S.P."/>
        </authorList>
    </citation>
    <scope>PHOSPHORYLATION [LARGE SCALE ANALYSIS] AT SER-25</scope>
    <scope>IDENTIFICATION BY MASS SPECTROMETRY [LARGE SCALE ANALYSIS]</scope>
    <source>
        <tissue>Brain</tissue>
        <tissue>Brown adipose tissue</tissue>
        <tissue>Lung</tissue>
        <tissue>Pancreas</tissue>
        <tissue>Spleen</tissue>
    </source>
</reference>
<keyword id="KW-0963">Cytoplasm</keyword>
<keyword id="KW-0342">GTP-binding</keyword>
<keyword id="KW-0547">Nucleotide-binding</keyword>
<keyword id="KW-0539">Nucleus</keyword>
<keyword id="KW-0597">Phosphoprotein</keyword>
<keyword id="KW-1185">Reference proteome</keyword>
<proteinExistence type="evidence at protein level"/>
<sequence>MASELQRPDSMPCHNRQVNSTSSPSPEHLLAEDRVLDHAEENNAAMAKLTLLPGHAHSSVLSERDSPACCSTNLHSENHSDSSDSGNYDAPVGGDSLLGDCELSRQIGAQLKLLPMNDQIRELQTIIRDKTASRGDFMFSADRLIRLVVEEGLNQLPYKECMVTTPTGHKYEGVKFEKGNCGVSIMRSGEAMEQGLRDCCRSIRIGKILIQSDEETQRAKVYYAKFPPDIHRRKVLLMYPILSTGNTVIEAVKVLIEHGVQPSVIILLSLFSTPHGAKSIIQEFPEITILTTEVHPVAPTHFGQKYFGTD</sequence>
<protein>
    <recommendedName>
        <fullName>Uracil phosphoribosyltransferase homolog</fullName>
    </recommendedName>
</protein>
<accession>B1AVZ0</accession>
<comment type="subcellular location">
    <subcellularLocation>
        <location evidence="1">Cytoplasm</location>
    </subcellularLocation>
    <subcellularLocation>
        <location evidence="1">Nucleus</location>
    </subcellularLocation>
</comment>
<comment type="similarity">
    <text evidence="4">Belongs to the UPRTase family.</text>
</comment>
<comment type="caution">
    <text evidence="4">The uracil binding region known from UPRTases is missing.</text>
</comment>
<name>UPP_MOUSE</name>
<gene>
    <name type="primary">Uprt</name>
</gene>
<feature type="chain" id="PRO_0000413215" description="Uracil phosphoribosyltransferase homolog">
    <location>
        <begin position="1"/>
        <end position="310"/>
    </location>
</feature>
<feature type="region of interest" description="Disordered" evidence="3">
    <location>
        <begin position="1"/>
        <end position="27"/>
    </location>
</feature>
<feature type="region of interest" description="Disordered" evidence="3">
    <location>
        <begin position="62"/>
        <end position="89"/>
    </location>
</feature>
<feature type="compositionally biased region" description="Polar residues" evidence="3">
    <location>
        <begin position="16"/>
        <end position="25"/>
    </location>
</feature>
<feature type="binding site" evidence="2">
    <location>
        <position position="134"/>
    </location>
    <ligand>
        <name>GTP</name>
        <dbReference type="ChEBI" id="CHEBI:37565"/>
    </ligand>
</feature>
<feature type="binding site" evidence="2">
    <location>
        <position position="143"/>
    </location>
    <ligand>
        <name>GTP</name>
        <dbReference type="ChEBI" id="CHEBI:37565"/>
    </ligand>
</feature>
<feature type="binding site" evidence="2">
    <location>
        <begin position="177"/>
        <end position="180"/>
    </location>
    <ligand>
        <name>GTP</name>
        <dbReference type="ChEBI" id="CHEBI:37565"/>
    </ligand>
</feature>
<feature type="binding site" evidence="2">
    <location>
        <position position="187"/>
    </location>
    <ligand>
        <name>5-phospho-alpha-D-ribose 1-diphosphate</name>
        <dbReference type="ChEBI" id="CHEBI:58017"/>
    </ligand>
</feature>
<feature type="binding site" evidence="2">
    <location>
        <position position="204"/>
    </location>
    <ligand>
        <name>GTP</name>
        <dbReference type="ChEBI" id="CHEBI:37565"/>
    </ligand>
</feature>
<feature type="binding site" evidence="2">
    <location>
        <position position="233"/>
    </location>
    <ligand>
        <name>GTP</name>
        <dbReference type="ChEBI" id="CHEBI:37565"/>
    </ligand>
</feature>
<feature type="binding site" evidence="2">
    <location>
        <begin position="239"/>
        <end position="247"/>
    </location>
    <ligand>
        <name>5-phospho-alpha-D-ribose 1-diphosphate</name>
        <dbReference type="ChEBI" id="CHEBI:58017"/>
    </ligand>
</feature>
<feature type="binding site" evidence="2">
    <location>
        <begin position="300"/>
        <end position="302"/>
    </location>
    <ligand>
        <name>uracil</name>
        <dbReference type="ChEBI" id="CHEBI:17568"/>
    </ligand>
</feature>
<feature type="modified residue" description="Phosphoserine" evidence="5">
    <location>
        <position position="25"/>
    </location>
</feature>